<gene>
    <name evidence="1" type="primary">rpsQ</name>
    <name type="ordered locus">Patl_0478</name>
</gene>
<dbReference type="EMBL" id="CP000388">
    <property type="protein sequence ID" value="ABG39008.1"/>
    <property type="molecule type" value="Genomic_DNA"/>
</dbReference>
<dbReference type="RefSeq" id="WP_011573393.1">
    <property type="nucleotide sequence ID" value="NC_008228.1"/>
</dbReference>
<dbReference type="SMR" id="Q15YN0"/>
<dbReference type="STRING" id="342610.Patl_0478"/>
<dbReference type="KEGG" id="pat:Patl_0478"/>
<dbReference type="eggNOG" id="COG0186">
    <property type="taxonomic scope" value="Bacteria"/>
</dbReference>
<dbReference type="HOGENOM" id="CLU_073626_1_1_6"/>
<dbReference type="OrthoDB" id="9811714at2"/>
<dbReference type="Proteomes" id="UP000001981">
    <property type="component" value="Chromosome"/>
</dbReference>
<dbReference type="GO" id="GO:0022627">
    <property type="term" value="C:cytosolic small ribosomal subunit"/>
    <property type="evidence" value="ECO:0007669"/>
    <property type="project" value="TreeGrafter"/>
</dbReference>
<dbReference type="GO" id="GO:0019843">
    <property type="term" value="F:rRNA binding"/>
    <property type="evidence" value="ECO:0007669"/>
    <property type="project" value="UniProtKB-UniRule"/>
</dbReference>
<dbReference type="GO" id="GO:0003735">
    <property type="term" value="F:structural constituent of ribosome"/>
    <property type="evidence" value="ECO:0007669"/>
    <property type="project" value="InterPro"/>
</dbReference>
<dbReference type="GO" id="GO:0006412">
    <property type="term" value="P:translation"/>
    <property type="evidence" value="ECO:0007669"/>
    <property type="project" value="UniProtKB-UniRule"/>
</dbReference>
<dbReference type="CDD" id="cd00364">
    <property type="entry name" value="Ribosomal_uS17"/>
    <property type="match status" value="1"/>
</dbReference>
<dbReference type="FunFam" id="2.40.50.140:FF:000014">
    <property type="entry name" value="30S ribosomal protein S17"/>
    <property type="match status" value="1"/>
</dbReference>
<dbReference type="Gene3D" id="2.40.50.140">
    <property type="entry name" value="Nucleic acid-binding proteins"/>
    <property type="match status" value="1"/>
</dbReference>
<dbReference type="HAMAP" id="MF_01345_B">
    <property type="entry name" value="Ribosomal_uS17_B"/>
    <property type="match status" value="1"/>
</dbReference>
<dbReference type="InterPro" id="IPR012340">
    <property type="entry name" value="NA-bd_OB-fold"/>
</dbReference>
<dbReference type="InterPro" id="IPR000266">
    <property type="entry name" value="Ribosomal_uS17"/>
</dbReference>
<dbReference type="InterPro" id="IPR019984">
    <property type="entry name" value="Ribosomal_uS17_bact/chlr"/>
</dbReference>
<dbReference type="NCBIfam" id="NF004123">
    <property type="entry name" value="PRK05610.1"/>
    <property type="match status" value="1"/>
</dbReference>
<dbReference type="NCBIfam" id="TIGR03635">
    <property type="entry name" value="uS17_bact"/>
    <property type="match status" value="1"/>
</dbReference>
<dbReference type="PANTHER" id="PTHR10744">
    <property type="entry name" value="40S RIBOSOMAL PROTEIN S11 FAMILY MEMBER"/>
    <property type="match status" value="1"/>
</dbReference>
<dbReference type="PANTHER" id="PTHR10744:SF1">
    <property type="entry name" value="SMALL RIBOSOMAL SUBUNIT PROTEIN US17M"/>
    <property type="match status" value="1"/>
</dbReference>
<dbReference type="Pfam" id="PF00366">
    <property type="entry name" value="Ribosomal_S17"/>
    <property type="match status" value="1"/>
</dbReference>
<dbReference type="PRINTS" id="PR00973">
    <property type="entry name" value="RIBOSOMALS17"/>
</dbReference>
<dbReference type="SUPFAM" id="SSF50249">
    <property type="entry name" value="Nucleic acid-binding proteins"/>
    <property type="match status" value="1"/>
</dbReference>
<proteinExistence type="inferred from homology"/>
<reference key="1">
    <citation type="submission" date="2006-06" db="EMBL/GenBank/DDBJ databases">
        <title>Complete sequence of Pseudoalteromonas atlantica T6c.</title>
        <authorList>
            <consortium name="US DOE Joint Genome Institute"/>
            <person name="Copeland A."/>
            <person name="Lucas S."/>
            <person name="Lapidus A."/>
            <person name="Barry K."/>
            <person name="Detter J.C."/>
            <person name="Glavina del Rio T."/>
            <person name="Hammon N."/>
            <person name="Israni S."/>
            <person name="Dalin E."/>
            <person name="Tice H."/>
            <person name="Pitluck S."/>
            <person name="Saunders E."/>
            <person name="Brettin T."/>
            <person name="Bruce D."/>
            <person name="Han C."/>
            <person name="Tapia R."/>
            <person name="Gilna P."/>
            <person name="Schmutz J."/>
            <person name="Larimer F."/>
            <person name="Land M."/>
            <person name="Hauser L."/>
            <person name="Kyrpides N."/>
            <person name="Kim E."/>
            <person name="Karls A.C."/>
            <person name="Bartlett D."/>
            <person name="Higgins B.P."/>
            <person name="Richardson P."/>
        </authorList>
    </citation>
    <scope>NUCLEOTIDE SEQUENCE [LARGE SCALE GENOMIC DNA]</scope>
    <source>
        <strain>T6c / ATCC BAA-1087</strain>
    </source>
</reference>
<feature type="chain" id="PRO_1000054997" description="Small ribosomal subunit protein uS17">
    <location>
        <begin position="1"/>
        <end position="83"/>
    </location>
</feature>
<name>RS17_PSEA6</name>
<organism>
    <name type="scientific">Pseudoalteromonas atlantica (strain T6c / ATCC BAA-1087)</name>
    <dbReference type="NCBI Taxonomy" id="3042615"/>
    <lineage>
        <taxon>Bacteria</taxon>
        <taxon>Pseudomonadati</taxon>
        <taxon>Pseudomonadota</taxon>
        <taxon>Gammaproteobacteria</taxon>
        <taxon>Alteromonadales</taxon>
        <taxon>Alteromonadaceae</taxon>
        <taxon>Paraglaciecola</taxon>
    </lineage>
</organism>
<evidence type="ECO:0000255" key="1">
    <source>
        <dbReference type="HAMAP-Rule" id="MF_01345"/>
    </source>
</evidence>
<evidence type="ECO:0000305" key="2"/>
<sequence>MTEQSSRTVQGRVVSNKMDKTITVAVERKVKSPIYGKFIKRTTKLHAHDETNQCNTGDVVTVRECRPMSKSKNWMLVDIVTKA</sequence>
<comment type="function">
    <text evidence="1">One of the primary rRNA binding proteins, it binds specifically to the 5'-end of 16S ribosomal RNA.</text>
</comment>
<comment type="subunit">
    <text evidence="1">Part of the 30S ribosomal subunit.</text>
</comment>
<comment type="similarity">
    <text evidence="1">Belongs to the universal ribosomal protein uS17 family.</text>
</comment>
<keyword id="KW-0687">Ribonucleoprotein</keyword>
<keyword id="KW-0689">Ribosomal protein</keyword>
<keyword id="KW-0694">RNA-binding</keyword>
<keyword id="KW-0699">rRNA-binding</keyword>
<accession>Q15YN0</accession>
<protein>
    <recommendedName>
        <fullName evidence="1">Small ribosomal subunit protein uS17</fullName>
    </recommendedName>
    <alternativeName>
        <fullName evidence="2">30S ribosomal protein S17</fullName>
    </alternativeName>
</protein>